<gene>
    <name type="ORF">GI16410</name>
</gene>
<organism>
    <name type="scientific">Drosophila mojavensis</name>
    <name type="common">Fruit fly</name>
    <dbReference type="NCBI Taxonomy" id="7230"/>
    <lineage>
        <taxon>Eukaryota</taxon>
        <taxon>Metazoa</taxon>
        <taxon>Ecdysozoa</taxon>
        <taxon>Arthropoda</taxon>
        <taxon>Hexapoda</taxon>
        <taxon>Insecta</taxon>
        <taxon>Pterygota</taxon>
        <taxon>Neoptera</taxon>
        <taxon>Endopterygota</taxon>
        <taxon>Diptera</taxon>
        <taxon>Brachycera</taxon>
        <taxon>Muscomorpha</taxon>
        <taxon>Ephydroidea</taxon>
        <taxon>Drosophilidae</taxon>
        <taxon>Drosophila</taxon>
    </lineage>
</organism>
<comment type="function">
    <text evidence="1">Oxygenase that can act as both a histone lysine demethylase and a ribosomal histidine hydroxylase. Specifically demethylates 'Lys-4' (H3K4me) and 'Lys-36' (H3K36me) of histone H3, thereby playing a central role in histone code (By similarity).</text>
</comment>
<comment type="catalytic activity">
    <reaction>
        <text>N(6),N(6)-dimethyl-L-lysyl(36)-[histone H3] + 2 2-oxoglutarate + 2 O2 = L-lysyl(36)-[histone H3] + 2 formaldehyde + 2 succinate + 2 CO2</text>
        <dbReference type="Rhea" id="RHEA:42032"/>
        <dbReference type="Rhea" id="RHEA-COMP:9785"/>
        <dbReference type="Rhea" id="RHEA-COMP:9787"/>
        <dbReference type="ChEBI" id="CHEBI:15379"/>
        <dbReference type="ChEBI" id="CHEBI:16526"/>
        <dbReference type="ChEBI" id="CHEBI:16810"/>
        <dbReference type="ChEBI" id="CHEBI:16842"/>
        <dbReference type="ChEBI" id="CHEBI:29969"/>
        <dbReference type="ChEBI" id="CHEBI:30031"/>
        <dbReference type="ChEBI" id="CHEBI:61976"/>
        <dbReference type="EC" id="1.14.11.27"/>
    </reaction>
</comment>
<comment type="cofactor">
    <cofactor evidence="1">
        <name>Fe(2+)</name>
        <dbReference type="ChEBI" id="CHEBI:29033"/>
    </cofactor>
    <text evidence="1">Binds 1 Fe(2+) ion per subunit.</text>
</comment>
<comment type="subcellular location">
    <subcellularLocation>
        <location evidence="1">Nucleus</location>
    </subcellularLocation>
</comment>
<comment type="similarity">
    <text evidence="4">Belongs to the ROX family. NO66 subfamily.</text>
</comment>
<accession>B4L6Q5</accession>
<feature type="chain" id="PRO_0000390987" description="Bifunctional lysine-specific demethylase and histidyl-hydroxylase NO66">
    <location>
        <begin position="1"/>
        <end position="888"/>
    </location>
</feature>
<feature type="domain" description="JmjC" evidence="2">
    <location>
        <begin position="564"/>
        <end position="709"/>
    </location>
</feature>
<feature type="region of interest" description="Disordered" evidence="3">
    <location>
        <begin position="83"/>
        <end position="157"/>
    </location>
</feature>
<feature type="region of interest" description="Disordered" evidence="3">
    <location>
        <begin position="187"/>
        <end position="208"/>
    </location>
</feature>
<feature type="region of interest" description="Disordered" evidence="3">
    <location>
        <begin position="261"/>
        <end position="446"/>
    </location>
</feature>
<feature type="compositionally biased region" description="Basic and acidic residues" evidence="3">
    <location>
        <begin position="98"/>
        <end position="108"/>
    </location>
</feature>
<feature type="compositionally biased region" description="Polar residues" evidence="3">
    <location>
        <begin position="116"/>
        <end position="139"/>
    </location>
</feature>
<feature type="compositionally biased region" description="Acidic residues" evidence="3">
    <location>
        <begin position="192"/>
        <end position="207"/>
    </location>
</feature>
<feature type="compositionally biased region" description="Basic and acidic residues" evidence="3">
    <location>
        <begin position="273"/>
        <end position="284"/>
    </location>
</feature>
<feature type="compositionally biased region" description="Low complexity" evidence="3">
    <location>
        <begin position="392"/>
        <end position="403"/>
    </location>
</feature>
<feature type="compositionally biased region" description="Basic and acidic residues" evidence="3">
    <location>
        <begin position="404"/>
        <end position="429"/>
    </location>
</feature>
<feature type="compositionally biased region" description="Low complexity" evidence="3">
    <location>
        <begin position="430"/>
        <end position="444"/>
    </location>
</feature>
<feature type="binding site" evidence="2">
    <location>
        <position position="610"/>
    </location>
    <ligand>
        <name>Fe cation</name>
        <dbReference type="ChEBI" id="CHEBI:24875"/>
        <note>catalytic</note>
    </ligand>
</feature>
<feature type="binding site" evidence="2">
    <location>
        <position position="612"/>
    </location>
    <ligand>
        <name>Fe cation</name>
        <dbReference type="ChEBI" id="CHEBI:24875"/>
        <note>catalytic</note>
    </ligand>
</feature>
<feature type="binding site" evidence="2">
    <location>
        <position position="675"/>
    </location>
    <ligand>
        <name>Fe cation</name>
        <dbReference type="ChEBI" id="CHEBI:24875"/>
        <note>catalytic</note>
    </ligand>
</feature>
<evidence type="ECO:0000250" key="1"/>
<evidence type="ECO:0000255" key="2">
    <source>
        <dbReference type="PROSITE-ProRule" id="PRU00538"/>
    </source>
</evidence>
<evidence type="ECO:0000256" key="3">
    <source>
        <dbReference type="SAM" id="MobiDB-lite"/>
    </source>
</evidence>
<evidence type="ECO:0000305" key="4"/>
<protein>
    <recommendedName>
        <fullName>Bifunctional lysine-specific demethylase and histidyl-hydroxylase NO66</fullName>
        <ecNumber>1.14.11.-</ecNumber>
        <ecNumber>1.14.11.27</ecNumber>
    </recommendedName>
    <alternativeName>
        <fullName>Histone lysine demethylase NO66</fullName>
    </alternativeName>
</protein>
<dbReference type="EC" id="1.14.11.-"/>
<dbReference type="EC" id="1.14.11.27"/>
<dbReference type="EMBL" id="CH933812">
    <property type="protein sequence ID" value="EDW06051.1"/>
    <property type="molecule type" value="Genomic_DNA"/>
</dbReference>
<dbReference type="RefSeq" id="XP_002011209.2">
    <property type="nucleotide sequence ID" value="XM_002011173.2"/>
</dbReference>
<dbReference type="SMR" id="B4L6Q5"/>
<dbReference type="GeneID" id="6585581"/>
<dbReference type="KEGG" id="dmo:Dmoj_GI16410"/>
<dbReference type="CTD" id="31374"/>
<dbReference type="eggNOG" id="KOG3706">
    <property type="taxonomic scope" value="Eukaryota"/>
</dbReference>
<dbReference type="HOGENOM" id="CLU_013645_2_0_1"/>
<dbReference type="InParanoid" id="B4L6Q5"/>
<dbReference type="OMA" id="WERNACQ"/>
<dbReference type="OrthoDB" id="425950at2759"/>
<dbReference type="Proteomes" id="UP000009192">
    <property type="component" value="Unassembled WGS sequence"/>
</dbReference>
<dbReference type="GO" id="GO:0005730">
    <property type="term" value="C:nucleolus"/>
    <property type="evidence" value="ECO:0007669"/>
    <property type="project" value="EnsemblMetazoa"/>
</dbReference>
<dbReference type="GO" id="GO:0005634">
    <property type="term" value="C:nucleus"/>
    <property type="evidence" value="ECO:0000250"/>
    <property type="project" value="UniProtKB"/>
</dbReference>
<dbReference type="GO" id="GO:0016706">
    <property type="term" value="F:2-oxoglutarate-dependent dioxygenase activity"/>
    <property type="evidence" value="ECO:0000250"/>
    <property type="project" value="UniProtKB"/>
</dbReference>
<dbReference type="GO" id="GO:0051864">
    <property type="term" value="F:histone H3K36 demethylase activity"/>
    <property type="evidence" value="ECO:0000250"/>
    <property type="project" value="UniProtKB"/>
</dbReference>
<dbReference type="GO" id="GO:0140680">
    <property type="term" value="F:histone H3K36me/H3K36me2 demethylase activity"/>
    <property type="evidence" value="ECO:0007669"/>
    <property type="project" value="UniProtKB-EC"/>
</dbReference>
<dbReference type="GO" id="GO:0034647">
    <property type="term" value="F:histone H3K4me/H3K4me2/H3K4me3 demethylase activity"/>
    <property type="evidence" value="ECO:0000250"/>
    <property type="project" value="UniProtKB"/>
</dbReference>
<dbReference type="GO" id="GO:0005506">
    <property type="term" value="F:iron ion binding"/>
    <property type="evidence" value="ECO:0000250"/>
    <property type="project" value="UniProtKB"/>
</dbReference>
<dbReference type="GO" id="GO:0048149">
    <property type="term" value="P:behavioral response to ethanol"/>
    <property type="evidence" value="ECO:0007669"/>
    <property type="project" value="EnsemblMetazoa"/>
</dbReference>
<dbReference type="GO" id="GO:0048512">
    <property type="term" value="P:circadian behavior"/>
    <property type="evidence" value="ECO:0007669"/>
    <property type="project" value="EnsemblMetazoa"/>
</dbReference>
<dbReference type="GO" id="GO:0045892">
    <property type="term" value="P:negative regulation of DNA-templated transcription"/>
    <property type="evidence" value="ECO:0000250"/>
    <property type="project" value="UniProtKB"/>
</dbReference>
<dbReference type="FunFam" id="2.60.120.650:FF:000013">
    <property type="entry name" value="Ribosomal oxygenase 1"/>
    <property type="match status" value="1"/>
</dbReference>
<dbReference type="FunFam" id="1.10.10.1500:FF:000001">
    <property type="entry name" value="ribosomal oxygenase 1 isoform X1"/>
    <property type="match status" value="1"/>
</dbReference>
<dbReference type="Gene3D" id="3.90.930.40">
    <property type="match status" value="1"/>
</dbReference>
<dbReference type="Gene3D" id="2.60.120.650">
    <property type="entry name" value="Cupin"/>
    <property type="match status" value="1"/>
</dbReference>
<dbReference type="Gene3D" id="1.10.10.1500">
    <property type="entry name" value="JmjC domain-containing ribosomal oxygenase (ROX), dimer domain"/>
    <property type="match status" value="1"/>
</dbReference>
<dbReference type="InterPro" id="IPR003347">
    <property type="entry name" value="JmjC_dom"/>
</dbReference>
<dbReference type="InterPro" id="IPR039994">
    <property type="entry name" value="NO66-like"/>
</dbReference>
<dbReference type="InterPro" id="IPR049043">
    <property type="entry name" value="RIOX1/NO66-like_C_WH"/>
</dbReference>
<dbReference type="PANTHER" id="PTHR13096">
    <property type="entry name" value="MINA53 MYC INDUCED NUCLEAR ANTIGEN"/>
    <property type="match status" value="1"/>
</dbReference>
<dbReference type="PANTHER" id="PTHR13096:SF8">
    <property type="entry name" value="RIBOSOMAL OXYGENASE 1"/>
    <property type="match status" value="1"/>
</dbReference>
<dbReference type="Pfam" id="PF08007">
    <property type="entry name" value="JmjC_2"/>
    <property type="match status" value="1"/>
</dbReference>
<dbReference type="Pfam" id="PF21233">
    <property type="entry name" value="RIOX1_C_WH"/>
    <property type="match status" value="1"/>
</dbReference>
<dbReference type="SUPFAM" id="SSF51197">
    <property type="entry name" value="Clavaminate synthase-like"/>
    <property type="match status" value="1"/>
</dbReference>
<dbReference type="PROSITE" id="PS51184">
    <property type="entry name" value="JMJC"/>
    <property type="match status" value="1"/>
</dbReference>
<keyword id="KW-0156">Chromatin regulator</keyword>
<keyword id="KW-0223">Dioxygenase</keyword>
<keyword id="KW-0408">Iron</keyword>
<keyword id="KW-0479">Metal-binding</keyword>
<keyword id="KW-0539">Nucleus</keyword>
<keyword id="KW-0560">Oxidoreductase</keyword>
<keyword id="KW-1185">Reference proteome</keyword>
<keyword id="KW-0678">Repressor</keyword>
<keyword id="KW-0804">Transcription</keyword>
<keyword id="KW-0805">Transcription regulation</keyword>
<reference key="1">
    <citation type="journal article" date="2007" name="Nature">
        <title>Evolution of genes and genomes on the Drosophila phylogeny.</title>
        <authorList>
            <consortium name="Drosophila 12 genomes consortium"/>
        </authorList>
    </citation>
    <scope>NUCLEOTIDE SEQUENCE [LARGE SCALE GENOMIC DNA]</scope>
    <source>
        <strain>Tucson 15081-1352.22</strain>
    </source>
</reference>
<name>NO66_DROMO</name>
<sequence length="888" mass="99001">MDRISAYAAYGLAPKKTSKRSTMKIAKHFSKKNAKKTKEAMAAKKEARKAAAKAALREVRKLERKAAADKAAKIAADKAADKAAAKAAAKAAKKAAKREKNIAKKQPEKSAAGVTENVQKQLENGQENNGTLINLSNGKQHQKPKAAKMSSSNGSFSGIDSDFLNSSDFGSTEDSFMSGSGDSFDYSNNSDFDFDSDGDSNDFDDSDAAASSCASCEYFDMDSNMVVGQESDTNGNSYMHNGTTQSEDQFTEEYTLSSIFNSTSSSGANPIKVEPRKAAKRNEPFDLNNNKNKPTAAKQPKMSLKQEQAQVGKQRADPAPSCPLPPRPSKTMIKSCPLPPKAPAAKPVPNKCRLSSRESLTKTGAKSCRLSSAPADKMANKMAAPSRKSSSKNKNNDNNNIDTNNKKDANNKKDANNNKDINNKKDANNNKDTNNNKDNNNKNKLSSNVSQLVTGNEKQRGPVHLENSIEEGKRMLNWLLNPITSETFFEQYWERNACQVKRKQPNYFTQLISFQMIDEMLIENQLEFTTNIDVTTYKKGVRQTLNPVGRAMSPAIWGYYGDGCSIRILNPSTYLPKLRQLCSTMQEFFHCLVGANVYLTPPNSQGFAPHYDDIEAFVIQVEGRKRWRLYAPPHQSDVLARTSSGNYKQEELGQPLFDAVLEAGDILYFPRGTVHQAVTEPKQHSLHITLSVYQQQAYANLLEVLMPSVLERAIKHHLSLRRGLPLHIWQHVGLAKGGQQSEQRDQLMNSTKQLVQRYLVPTEAQIDAAVDQLAKRFQHEALPPYIKPEESMRTTKVRLLRRQHPAPGGRRQQLRVYYYVDNALEYCKNEPNYMEIQPTEAPAVEALMTTYPAYLKVGKLPLRSADRRIEVATALWERGLLMTEKPFK</sequence>
<proteinExistence type="inferred from homology"/>